<name>WAPL_SCHPO</name>
<dbReference type="EMBL" id="CU329671">
    <property type="protein sequence ID" value="CAA22292.1"/>
    <property type="molecule type" value="Genomic_DNA"/>
</dbReference>
<dbReference type="EMBL" id="AB027807">
    <property type="protein sequence ID" value="BAA87111.1"/>
    <property type="molecule type" value="Genomic_DNA"/>
</dbReference>
<dbReference type="PIR" id="T40469">
    <property type="entry name" value="T40469"/>
</dbReference>
<dbReference type="RefSeq" id="NP_595195.1">
    <property type="nucleotide sequence ID" value="NM_001021102.2"/>
</dbReference>
<dbReference type="SMR" id="O94364"/>
<dbReference type="BioGRID" id="277377">
    <property type="interactions" value="17"/>
</dbReference>
<dbReference type="STRING" id="284812.O94364"/>
<dbReference type="iPTMnet" id="O94364"/>
<dbReference type="PaxDb" id="4896-SPBC428.17c.1"/>
<dbReference type="EnsemblFungi" id="SPBC428.17c.1">
    <property type="protein sequence ID" value="SPBC428.17c.1:pep"/>
    <property type="gene ID" value="SPBC428.17c"/>
</dbReference>
<dbReference type="GeneID" id="2540860"/>
<dbReference type="KEGG" id="spo:2540860"/>
<dbReference type="PomBase" id="SPBC428.17c">
    <property type="gene designation" value="wpl1"/>
</dbReference>
<dbReference type="VEuPathDB" id="FungiDB:SPBC428.17c"/>
<dbReference type="eggNOG" id="ENOG502RS0D">
    <property type="taxonomic scope" value="Eukaryota"/>
</dbReference>
<dbReference type="HOGENOM" id="CLU_460162_0_0_1"/>
<dbReference type="InParanoid" id="O94364"/>
<dbReference type="OMA" id="YREQRSY"/>
<dbReference type="Reactome" id="R-SPO-2470946">
    <property type="pathway name" value="Cohesin Loading onto Chromatin"/>
</dbReference>
<dbReference type="Reactome" id="R-SPO-2500257">
    <property type="pathway name" value="Resolution of Sister Chromatid Cohesion"/>
</dbReference>
<dbReference type="PRO" id="PR:O94364"/>
<dbReference type="Proteomes" id="UP000002485">
    <property type="component" value="Chromosome II"/>
</dbReference>
<dbReference type="GO" id="GO:0000228">
    <property type="term" value="C:nuclear chromosome"/>
    <property type="evidence" value="ECO:0000305"/>
    <property type="project" value="PomBase"/>
</dbReference>
<dbReference type="GO" id="GO:0005634">
    <property type="term" value="C:nucleus"/>
    <property type="evidence" value="ECO:0007005"/>
    <property type="project" value="PomBase"/>
</dbReference>
<dbReference type="GO" id="GO:0090695">
    <property type="term" value="C:Wpl/Pds5 cohesin loading/unloading complex"/>
    <property type="evidence" value="ECO:0000269"/>
    <property type="project" value="PomBase"/>
</dbReference>
<dbReference type="GO" id="GO:0016887">
    <property type="term" value="F:ATP hydrolysis activity"/>
    <property type="evidence" value="ECO:0000305"/>
    <property type="project" value="PomBase"/>
</dbReference>
<dbReference type="GO" id="GO:0043008">
    <property type="term" value="F:ATP-dependent protein binding"/>
    <property type="evidence" value="ECO:0000314"/>
    <property type="project" value="PomBase"/>
</dbReference>
<dbReference type="GO" id="GO:0140670">
    <property type="term" value="F:cohesin unloader activity"/>
    <property type="evidence" value="ECO:0000315"/>
    <property type="project" value="PomBase"/>
</dbReference>
<dbReference type="GO" id="GO:0003677">
    <property type="term" value="F:DNA binding"/>
    <property type="evidence" value="ECO:0000314"/>
    <property type="project" value="PomBase"/>
</dbReference>
<dbReference type="GO" id="GO:0051301">
    <property type="term" value="P:cell division"/>
    <property type="evidence" value="ECO:0007669"/>
    <property type="project" value="UniProtKB-KW"/>
</dbReference>
<dbReference type="GO" id="GO:0140588">
    <property type="term" value="P:chromatin looping"/>
    <property type="evidence" value="ECO:0000315"/>
    <property type="project" value="PomBase"/>
</dbReference>
<dbReference type="GO" id="GO:0007129">
    <property type="term" value="P:homologous chromosome pairing at meiosis"/>
    <property type="evidence" value="ECO:0000315"/>
    <property type="project" value="PomBase"/>
</dbReference>
<dbReference type="GO" id="GO:0007064">
    <property type="term" value="P:mitotic sister chromatid cohesion"/>
    <property type="evidence" value="ECO:0000314"/>
    <property type="project" value="PomBase"/>
</dbReference>
<dbReference type="Gene3D" id="1.25.10.10">
    <property type="entry name" value="Leucine-rich Repeat Variant"/>
    <property type="match status" value="2"/>
</dbReference>
<dbReference type="InterPro" id="IPR011989">
    <property type="entry name" value="ARM-like"/>
</dbReference>
<dbReference type="InterPro" id="IPR039874">
    <property type="entry name" value="WAPL"/>
</dbReference>
<dbReference type="InterPro" id="IPR022771">
    <property type="entry name" value="WAPL_C"/>
</dbReference>
<dbReference type="PANTHER" id="PTHR22100">
    <property type="entry name" value="WINGS APART-LIKE PROTEIN HOMOLOG"/>
    <property type="match status" value="1"/>
</dbReference>
<dbReference type="PANTHER" id="PTHR22100:SF13">
    <property type="entry name" value="WINGS APART-LIKE PROTEIN HOMOLOG"/>
    <property type="match status" value="1"/>
</dbReference>
<dbReference type="Pfam" id="PF07814">
    <property type="entry name" value="WAPL"/>
    <property type="match status" value="1"/>
</dbReference>
<accession>O94364</accession>
<accession>Q9USF1</accession>
<feature type="chain" id="PRO_0000116778" description="Wings apart-like protein homolog 1">
    <location>
        <begin position="1"/>
        <end position="602"/>
    </location>
</feature>
<feature type="domain" description="WAPL">
    <location>
        <begin position="160"/>
        <end position="492"/>
    </location>
</feature>
<feature type="region of interest" description="Disordered" evidence="1">
    <location>
        <begin position="34"/>
        <end position="66"/>
    </location>
</feature>
<feature type="compositionally biased region" description="Polar residues" evidence="1">
    <location>
        <begin position="54"/>
        <end position="66"/>
    </location>
</feature>
<protein>
    <recommendedName>
        <fullName>Wings apart-like protein homolog 1</fullName>
    </recommendedName>
</protein>
<evidence type="ECO:0000256" key="1">
    <source>
        <dbReference type="SAM" id="MobiDB-lite"/>
    </source>
</evidence>
<evidence type="ECO:0000269" key="2">
    <source>
    </source>
</evidence>
<evidence type="ECO:0000269" key="3">
    <source>
    </source>
</evidence>
<evidence type="ECO:0000305" key="4"/>
<comment type="function">
    <text evidence="2 3">Regulator of sister chromatid cohesion in mitosis which negatively regulates cohesin association with chromatin.</text>
</comment>
<comment type="subcellular location">
    <subcellularLocation>
        <location>Nucleus</location>
    </subcellularLocation>
    <subcellularLocation>
        <location>Chromosome</location>
    </subcellularLocation>
</comment>
<comment type="similarity">
    <text evidence="4">Belongs to the WAPL family.</text>
</comment>
<gene>
    <name type="primary">wpl1</name>
    <name type="ORF">SPBC428.17c</name>
</gene>
<organism>
    <name type="scientific">Schizosaccharomyces pombe (strain 972 / ATCC 24843)</name>
    <name type="common">Fission yeast</name>
    <dbReference type="NCBI Taxonomy" id="284812"/>
    <lineage>
        <taxon>Eukaryota</taxon>
        <taxon>Fungi</taxon>
        <taxon>Dikarya</taxon>
        <taxon>Ascomycota</taxon>
        <taxon>Taphrinomycotina</taxon>
        <taxon>Schizosaccharomycetes</taxon>
        <taxon>Schizosaccharomycetales</taxon>
        <taxon>Schizosaccharomycetaceae</taxon>
        <taxon>Schizosaccharomyces</taxon>
    </lineage>
</organism>
<proteinExistence type="inferred from homology"/>
<reference key="1">
    <citation type="journal article" date="2002" name="Nature">
        <title>The genome sequence of Schizosaccharomyces pombe.</title>
        <authorList>
            <person name="Wood V."/>
            <person name="Gwilliam R."/>
            <person name="Rajandream M.A."/>
            <person name="Lyne M.H."/>
            <person name="Lyne R."/>
            <person name="Stewart A."/>
            <person name="Sgouros J.G."/>
            <person name="Peat N."/>
            <person name="Hayles J."/>
            <person name="Baker S.G."/>
            <person name="Basham D."/>
            <person name="Bowman S."/>
            <person name="Brooks K."/>
            <person name="Brown D."/>
            <person name="Brown S."/>
            <person name="Chillingworth T."/>
            <person name="Churcher C.M."/>
            <person name="Collins M."/>
            <person name="Connor R."/>
            <person name="Cronin A."/>
            <person name="Davis P."/>
            <person name="Feltwell T."/>
            <person name="Fraser A."/>
            <person name="Gentles S."/>
            <person name="Goble A."/>
            <person name="Hamlin N."/>
            <person name="Harris D.E."/>
            <person name="Hidalgo J."/>
            <person name="Hodgson G."/>
            <person name="Holroyd S."/>
            <person name="Hornsby T."/>
            <person name="Howarth S."/>
            <person name="Huckle E.J."/>
            <person name="Hunt S."/>
            <person name="Jagels K."/>
            <person name="James K.D."/>
            <person name="Jones L."/>
            <person name="Jones M."/>
            <person name="Leather S."/>
            <person name="McDonald S."/>
            <person name="McLean J."/>
            <person name="Mooney P."/>
            <person name="Moule S."/>
            <person name="Mungall K.L."/>
            <person name="Murphy L.D."/>
            <person name="Niblett D."/>
            <person name="Odell C."/>
            <person name="Oliver K."/>
            <person name="O'Neil S."/>
            <person name="Pearson D."/>
            <person name="Quail M.A."/>
            <person name="Rabbinowitsch E."/>
            <person name="Rutherford K.M."/>
            <person name="Rutter S."/>
            <person name="Saunders D."/>
            <person name="Seeger K."/>
            <person name="Sharp S."/>
            <person name="Skelton J."/>
            <person name="Simmonds M.N."/>
            <person name="Squares R."/>
            <person name="Squares S."/>
            <person name="Stevens K."/>
            <person name="Taylor K."/>
            <person name="Taylor R.G."/>
            <person name="Tivey A."/>
            <person name="Walsh S.V."/>
            <person name="Warren T."/>
            <person name="Whitehead S."/>
            <person name="Woodward J.R."/>
            <person name="Volckaert G."/>
            <person name="Aert R."/>
            <person name="Robben J."/>
            <person name="Grymonprez B."/>
            <person name="Weltjens I."/>
            <person name="Vanstreels E."/>
            <person name="Rieger M."/>
            <person name="Schaefer M."/>
            <person name="Mueller-Auer S."/>
            <person name="Gabel C."/>
            <person name="Fuchs M."/>
            <person name="Duesterhoeft A."/>
            <person name="Fritzc C."/>
            <person name="Holzer E."/>
            <person name="Moestl D."/>
            <person name="Hilbert H."/>
            <person name="Borzym K."/>
            <person name="Langer I."/>
            <person name="Beck A."/>
            <person name="Lehrach H."/>
            <person name="Reinhardt R."/>
            <person name="Pohl T.M."/>
            <person name="Eger P."/>
            <person name="Zimmermann W."/>
            <person name="Wedler H."/>
            <person name="Wambutt R."/>
            <person name="Purnelle B."/>
            <person name="Goffeau A."/>
            <person name="Cadieu E."/>
            <person name="Dreano S."/>
            <person name="Gloux S."/>
            <person name="Lelaure V."/>
            <person name="Mottier S."/>
            <person name="Galibert F."/>
            <person name="Aves S.J."/>
            <person name="Xiang Z."/>
            <person name="Hunt C."/>
            <person name="Moore K."/>
            <person name="Hurst S.M."/>
            <person name="Lucas M."/>
            <person name="Rochet M."/>
            <person name="Gaillardin C."/>
            <person name="Tallada V.A."/>
            <person name="Garzon A."/>
            <person name="Thode G."/>
            <person name="Daga R.R."/>
            <person name="Cruzado L."/>
            <person name="Jimenez J."/>
            <person name="Sanchez M."/>
            <person name="del Rey F."/>
            <person name="Benito J."/>
            <person name="Dominguez A."/>
            <person name="Revuelta J.L."/>
            <person name="Moreno S."/>
            <person name="Armstrong J."/>
            <person name="Forsburg S.L."/>
            <person name="Cerutti L."/>
            <person name="Lowe T."/>
            <person name="McCombie W.R."/>
            <person name="Paulsen I."/>
            <person name="Potashkin J."/>
            <person name="Shpakovski G.V."/>
            <person name="Ussery D."/>
            <person name="Barrell B.G."/>
            <person name="Nurse P."/>
        </authorList>
    </citation>
    <scope>NUCLEOTIDE SEQUENCE [LARGE SCALE GENOMIC DNA]</scope>
    <source>
        <strain>972 / ATCC 24843</strain>
    </source>
</reference>
<reference key="2">
    <citation type="journal article" date="2000" name="Genes Cells">
        <title>Large-scale screening of intracellular protein localization in living fission yeast cells by the use of a GFP-fusion genomic DNA library.</title>
        <authorList>
            <person name="Ding D.-Q."/>
            <person name="Tomita Y."/>
            <person name="Yamamoto A."/>
            <person name="Chikashige Y."/>
            <person name="Haraguchi T."/>
            <person name="Hiraoka Y."/>
        </authorList>
    </citation>
    <scope>NUCLEOTIDE SEQUENCE [LARGE SCALE GENOMIC DNA] OF 1-112</scope>
    <scope>SUBCELLULAR LOCATION</scope>
    <source>
        <strain>ATCC 38364 / 968</strain>
    </source>
</reference>
<reference key="3">
    <citation type="journal article" date="2006" name="Nat. Biotechnol.">
        <title>ORFeome cloning and global analysis of protein localization in the fission yeast Schizosaccharomyces pombe.</title>
        <authorList>
            <person name="Matsuyama A."/>
            <person name="Arai R."/>
            <person name="Yashiroda Y."/>
            <person name="Shirai A."/>
            <person name="Kamata A."/>
            <person name="Sekido S."/>
            <person name="Kobayashi Y."/>
            <person name="Hashimoto A."/>
            <person name="Hamamoto M."/>
            <person name="Hiraoka Y."/>
            <person name="Horinouchi S."/>
            <person name="Yoshida M."/>
        </authorList>
    </citation>
    <scope>SUBCELLULAR LOCATION [LARGE SCALE ANALYSIS]</scope>
</reference>
<reference key="4">
    <citation type="journal article" date="2008" name="EMBO J.">
        <title>Cell-cycle regulation of cohesin stability along fission yeast chromosomes.</title>
        <authorList>
            <person name="Bernard P."/>
            <person name="Schmidt C.K."/>
            <person name="Vaur S."/>
            <person name="Dheur S."/>
            <person name="Drogat J."/>
            <person name="Genier S."/>
            <person name="Ekwall K."/>
            <person name="Uhlmann F."/>
            <person name="Javerzat J.P."/>
        </authorList>
    </citation>
    <scope>FUNCTION</scope>
</reference>
<reference key="5">
    <citation type="journal article" date="2011" name="Mol. Cell. Biol.">
        <title>Psm3 acetylation on conserved lysine residues is dispensable for viability in fission yeast but contributes to Eso1-mediated sister chromatid cohesion by antagonizing Wpl1.</title>
        <authorList>
            <person name="Feytout A."/>
            <person name="Vaur S."/>
            <person name="Genier S."/>
            <person name="Vazquez S."/>
            <person name="Javerzat J.P."/>
        </authorList>
    </citation>
    <scope>FUNCTION</scope>
</reference>
<sequence>MKRGKCKEKDNGLKRISSESEVWNFLDVTVSELNKQKRSPGQTVSKRLHKKQRVVSNPDLSLPSSPVKQILRNGLQNSKYGSHKTGLERSASCSSIDASANHSSTTYREQRSYLMEEGLDTQPIVPREVSSGRELDSTNHTIGTERAFLIEEDVSEDDEIQMKSIHELRFAGEQQRIVDEIEYLVDGVTFSGNSSASRYLSLIGIAEKMFDNSFRLCLKSIRDVFLRIFEEIDPKDTLHTFLQIYIFATMANEMDCMSSLLDAYSNNVKLLLQTAITLEPQVPVSILAKSLPKSVKGAVQEFVIKAELTFSFSNESLASSDSISLAAIALMKTSSGVFAESELFTELINLLIEKSYPILKENDGSNNFLLHALCSSLEKFTDFQGSEKIQKVSQILSSKLQILIDEHNETNSPKIDDTVVHACSEKLLRTLIQTVNSNSDHALAVSKSEVPLFAYKILQKFSNFSSDDETTRELIILILGLLLGLVEESHEFIQTITHVEVSFGASALDVLISFYQKNESIVEISGYVVMILSHCFLNDPKAFAQLKPLISQFYESLHKFKNFHLKLKEELMMMGSNGLAIVSIIDELHKSLQDYLRSDLVK</sequence>
<keyword id="KW-0131">Cell cycle</keyword>
<keyword id="KW-0132">Cell division</keyword>
<keyword id="KW-0158">Chromosome</keyword>
<keyword id="KW-0498">Mitosis</keyword>
<keyword id="KW-0539">Nucleus</keyword>
<keyword id="KW-1185">Reference proteome</keyword>